<name>CYH2_BOVIN</name>
<organism>
    <name type="scientific">Bos taurus</name>
    <name type="common">Bovine</name>
    <dbReference type="NCBI Taxonomy" id="9913"/>
    <lineage>
        <taxon>Eukaryota</taxon>
        <taxon>Metazoa</taxon>
        <taxon>Chordata</taxon>
        <taxon>Craniata</taxon>
        <taxon>Vertebrata</taxon>
        <taxon>Euteleostomi</taxon>
        <taxon>Mammalia</taxon>
        <taxon>Eutheria</taxon>
        <taxon>Laurasiatheria</taxon>
        <taxon>Artiodactyla</taxon>
        <taxon>Ruminantia</taxon>
        <taxon>Pecora</taxon>
        <taxon>Bovidae</taxon>
        <taxon>Bovinae</taxon>
        <taxon>Bos</taxon>
    </lineage>
</organism>
<keyword id="KW-1003">Cell membrane</keyword>
<keyword id="KW-0966">Cell projection</keyword>
<keyword id="KW-0175">Coiled coil</keyword>
<keyword id="KW-0963">Cytoplasm</keyword>
<keyword id="KW-0344">Guanine-nucleotide releasing factor</keyword>
<keyword id="KW-0446">Lipid-binding</keyword>
<keyword id="KW-0472">Membrane</keyword>
<keyword id="KW-1185">Reference proteome</keyword>
<dbReference type="EMBL" id="BC112778">
    <property type="protein sequence ID" value="AAI12779.1"/>
    <property type="molecule type" value="mRNA"/>
</dbReference>
<dbReference type="RefSeq" id="NP_001070562.1">
    <property type="nucleotide sequence ID" value="NM_001077094.2"/>
</dbReference>
<dbReference type="BMRB" id="Q2KI41"/>
<dbReference type="SMR" id="Q2KI41"/>
<dbReference type="FunCoup" id="Q2KI41">
    <property type="interactions" value="2464"/>
</dbReference>
<dbReference type="STRING" id="9913.ENSBTAP00000057950"/>
<dbReference type="PaxDb" id="9913-ENSBTAP00000001963"/>
<dbReference type="GeneID" id="768035"/>
<dbReference type="KEGG" id="bta:768035"/>
<dbReference type="CTD" id="9266"/>
<dbReference type="eggNOG" id="KOG0930">
    <property type="taxonomic scope" value="Eukaryota"/>
</dbReference>
<dbReference type="HOGENOM" id="CLU_032820_3_0_1"/>
<dbReference type="InParanoid" id="Q2KI41"/>
<dbReference type="OrthoDB" id="430364at2759"/>
<dbReference type="TreeFam" id="TF352091"/>
<dbReference type="Proteomes" id="UP000009136">
    <property type="component" value="Unplaced"/>
</dbReference>
<dbReference type="GO" id="GO:0005737">
    <property type="term" value="C:cytoplasm"/>
    <property type="evidence" value="ECO:0000250"/>
    <property type="project" value="UniProtKB"/>
</dbReference>
<dbReference type="GO" id="GO:0030426">
    <property type="term" value="C:growth cone"/>
    <property type="evidence" value="ECO:0007669"/>
    <property type="project" value="UniProtKB-SubCell"/>
</dbReference>
<dbReference type="GO" id="GO:0005886">
    <property type="term" value="C:plasma membrane"/>
    <property type="evidence" value="ECO:0000250"/>
    <property type="project" value="UniProtKB"/>
</dbReference>
<dbReference type="GO" id="GO:0005085">
    <property type="term" value="F:guanyl-nucleotide exchange factor activity"/>
    <property type="evidence" value="ECO:0000250"/>
    <property type="project" value="UniProtKB"/>
</dbReference>
<dbReference type="GO" id="GO:0070679">
    <property type="term" value="F:inositol 1,4,5 trisphosphate binding"/>
    <property type="evidence" value="ECO:0000250"/>
    <property type="project" value="UniProtKB"/>
</dbReference>
<dbReference type="GO" id="GO:0008289">
    <property type="term" value="F:lipid binding"/>
    <property type="evidence" value="ECO:0007669"/>
    <property type="project" value="UniProtKB-KW"/>
</dbReference>
<dbReference type="GO" id="GO:0032012">
    <property type="term" value="P:regulation of ARF protein signal transduction"/>
    <property type="evidence" value="ECO:0007669"/>
    <property type="project" value="InterPro"/>
</dbReference>
<dbReference type="CDD" id="cd01252">
    <property type="entry name" value="PH_GRP1-like"/>
    <property type="match status" value="1"/>
</dbReference>
<dbReference type="CDD" id="cd00171">
    <property type="entry name" value="Sec7"/>
    <property type="match status" value="1"/>
</dbReference>
<dbReference type="FunFam" id="1.10.1000.11:FF:000002">
    <property type="entry name" value="Cytohesin 1"/>
    <property type="match status" value="1"/>
</dbReference>
<dbReference type="FunFam" id="1.10.220.20:FF:000003">
    <property type="entry name" value="Cytohesin 1"/>
    <property type="match status" value="1"/>
</dbReference>
<dbReference type="FunFam" id="2.30.29.30:FF:000009">
    <property type="entry name" value="Cytohesin 1"/>
    <property type="match status" value="1"/>
</dbReference>
<dbReference type="Gene3D" id="1.10.220.20">
    <property type="match status" value="1"/>
</dbReference>
<dbReference type="Gene3D" id="1.10.1000.11">
    <property type="entry name" value="Arf Nucleotide-binding Site Opener,domain 2"/>
    <property type="match status" value="1"/>
</dbReference>
<dbReference type="Gene3D" id="2.30.29.30">
    <property type="entry name" value="Pleckstrin-homology domain (PH domain)/Phosphotyrosine-binding domain (PTB)"/>
    <property type="match status" value="1"/>
</dbReference>
<dbReference type="InterPro" id="IPR011993">
    <property type="entry name" value="PH-like_dom_sf"/>
</dbReference>
<dbReference type="InterPro" id="IPR001849">
    <property type="entry name" value="PH_domain"/>
</dbReference>
<dbReference type="InterPro" id="IPR023394">
    <property type="entry name" value="Sec7_C_sf"/>
</dbReference>
<dbReference type="InterPro" id="IPR000904">
    <property type="entry name" value="Sec7_dom"/>
</dbReference>
<dbReference type="InterPro" id="IPR035999">
    <property type="entry name" value="Sec7_dom_sf"/>
</dbReference>
<dbReference type="PANTHER" id="PTHR10663:SF343">
    <property type="entry name" value="CYTOHESIN-2"/>
    <property type="match status" value="1"/>
</dbReference>
<dbReference type="PANTHER" id="PTHR10663">
    <property type="entry name" value="GUANYL-NUCLEOTIDE EXCHANGE FACTOR"/>
    <property type="match status" value="1"/>
</dbReference>
<dbReference type="Pfam" id="PF00169">
    <property type="entry name" value="PH"/>
    <property type="match status" value="1"/>
</dbReference>
<dbReference type="Pfam" id="PF01369">
    <property type="entry name" value="Sec7"/>
    <property type="match status" value="1"/>
</dbReference>
<dbReference type="SMART" id="SM00233">
    <property type="entry name" value="PH"/>
    <property type="match status" value="1"/>
</dbReference>
<dbReference type="SMART" id="SM00222">
    <property type="entry name" value="Sec7"/>
    <property type="match status" value="1"/>
</dbReference>
<dbReference type="SUPFAM" id="SSF50729">
    <property type="entry name" value="PH domain-like"/>
    <property type="match status" value="1"/>
</dbReference>
<dbReference type="SUPFAM" id="SSF48425">
    <property type="entry name" value="Sec7 domain"/>
    <property type="match status" value="1"/>
</dbReference>
<dbReference type="PROSITE" id="PS50003">
    <property type="entry name" value="PH_DOMAIN"/>
    <property type="match status" value="1"/>
</dbReference>
<dbReference type="PROSITE" id="PS50190">
    <property type="entry name" value="SEC7"/>
    <property type="match status" value="1"/>
</dbReference>
<reference key="1">
    <citation type="submission" date="2006-01" db="EMBL/GenBank/DDBJ databases">
        <authorList>
            <consortium name="NIH - Mammalian Gene Collection (MGC) project"/>
        </authorList>
    </citation>
    <scope>NUCLEOTIDE SEQUENCE [LARGE SCALE MRNA]</scope>
    <source>
        <strain>Hereford</strain>
        <tissue>Hypothalamus</tissue>
    </source>
</reference>
<comment type="function">
    <text evidence="2 3">Acts as a guanine-nucleotide exchange factor (GEF). Promotes guanine-nucleotide exchange on ARF1, ARF3 and ARF6. Promotes the activation of ARF factors through replacement of GDP with GTP. The cell membrane form, in association with ARL4 proteins, recruits ARF6 to the plasma membrane (By similarity). Involved in neurite growth (By similarity).</text>
</comment>
<comment type="subunit">
    <text evidence="2 3">Heteromer. Composed of TAMALIN, CYTH2 and at least one GRM1. Interacts with ARRB1. Interacts with ARL4D; the interaction is direct (By similarity). Directly interacts with CCDC120 through the coiled coil domain; this interaction stabilizes CCDC120, possibly by preventing its ubiquitination, and is required for neurite growth in neuroblastoma cells. Interacts (via N-terminal domain) with INAVA (via N-terminal domain) (By similarity).</text>
</comment>
<comment type="subcellular location">
    <subcellularLocation>
        <location evidence="3">Cell membrane</location>
        <topology evidence="3">Peripheral membrane protein</topology>
    </subcellularLocation>
    <subcellularLocation>
        <location evidence="2">Cytoplasm</location>
    </subcellularLocation>
    <subcellularLocation>
        <location evidence="2">Cell projection</location>
    </subcellularLocation>
    <subcellularLocation>
        <location evidence="2">Cell projection</location>
        <location evidence="2">Growth cone</location>
    </subcellularLocation>
    <text evidence="2 3">Recruited to the cell membrane through its association with ARL4A, ARL4C and ARL4D. Also requires interaction with phosphoinositides for targeting to plasma membrane. In differentiating neuroblastoma cells, colocalizes with CCDC120 in both neurite shaft and growth cone areas.</text>
</comment>
<comment type="domain">
    <text evidence="1">Binds via its PH domain to the inositol head group of phosphatidylinositol 3,4,5-trisphosphate. The PH domain is necessary and sufficient for plasma membrane relocalization (By similarity).</text>
</comment>
<comment type="domain">
    <text evidence="1">Autoinhibited by its C-terminal basic region.</text>
</comment>
<comment type="domain">
    <text evidence="2">The coiled coil domain is involved in interaction with CCDC120.</text>
</comment>
<gene>
    <name type="primary">CYTH2</name>
    <name type="synonym">PSCD2</name>
</gene>
<protein>
    <recommendedName>
        <fullName>Cytohesin-2</fullName>
    </recommendedName>
    <alternativeName>
        <fullName>PH, SEC7 and coiled-coil domain-containing protein 2</fullName>
    </alternativeName>
</protein>
<proteinExistence type="evidence at transcript level"/>
<accession>Q2KI41</accession>
<sequence length="410" mass="47492">MEDGVYEPPDLTPEERMELENIRRRKQELLVEIQRLREELSEAMSEVEGLEANEGSKTLQRNRKMAMGRKKFNMDPKKGIQFLVENELLQNTPEEIARFLYKGEGLNKTAIGDYLGEREELNLAVLHAFVDLHEFTDLNLVQALRQFLWSFRLPGEAQKIDRMMEAFAQRYCLCNPGVFQSTDTCYVLSFAVIMLNTSLHNPNVRDKPGLERFVAMNRGINEGGDLPEELLRNLYDSIRNEPFKIPEDDGNDLTHTFFNPDREGWLLKLGAQAPSPPSLPGGRVKTWKRRWFILTDNCLYYFEYTTDKEPRGIIPLENLSIREVDDPRKPNCFELYIPNNKGQLIKACKTEADGRVVEGNHMVYRISAPTQEEKDEWIKSIQAAVSVDPFYEMLAARKKRISVKKKQEQP</sequence>
<evidence type="ECO:0000250" key="1"/>
<evidence type="ECO:0000250" key="2">
    <source>
        <dbReference type="UniProtKB" id="P63034"/>
    </source>
</evidence>
<evidence type="ECO:0000250" key="3">
    <source>
        <dbReference type="UniProtKB" id="Q99418"/>
    </source>
</evidence>
<evidence type="ECO:0000255" key="4"/>
<evidence type="ECO:0000255" key="5">
    <source>
        <dbReference type="PROSITE-ProRule" id="PRU00145"/>
    </source>
</evidence>
<evidence type="ECO:0000255" key="6">
    <source>
        <dbReference type="PROSITE-ProRule" id="PRU00189"/>
    </source>
</evidence>
<feature type="chain" id="PRO_0000245605" description="Cytohesin-2">
    <location>
        <begin position="1"/>
        <end position="410"/>
    </location>
</feature>
<feature type="domain" description="SEC7" evidence="6">
    <location>
        <begin position="54"/>
        <end position="241"/>
    </location>
</feature>
<feature type="domain" description="PH" evidence="5">
    <location>
        <begin position="259"/>
        <end position="386"/>
    </location>
</feature>
<feature type="region of interest" description="C-terminal autoinhibitory region" evidence="1">
    <location>
        <begin position="397"/>
        <end position="405"/>
    </location>
</feature>
<feature type="coiled-coil region" evidence="4">
    <location>
        <begin position="13"/>
        <end position="56"/>
    </location>
</feature>
<feature type="binding site" evidence="1">
    <location>
        <begin position="268"/>
        <end position="271"/>
    </location>
    <ligand>
        <name>a 1,2-diacyl-sn-glycero-3-phospho-(1D-myo-inositol-3,4,5-trisphosphate)</name>
        <dbReference type="ChEBI" id="CHEBI:57836"/>
    </ligand>
</feature>
<feature type="binding site" evidence="1">
    <location>
        <position position="290"/>
    </location>
    <ligand>
        <name>a 1,2-diacyl-sn-glycero-3-phospho-(1D-myo-inositol-3,4,5-trisphosphate)</name>
        <dbReference type="ChEBI" id="CHEBI:57836"/>
    </ligand>
</feature>
<feature type="binding site" evidence="1">
    <location>
        <position position="301"/>
    </location>
    <ligand>
        <name>a 1,2-diacyl-sn-glycero-3-phospho-(1D-myo-inositol-3,4,5-trisphosphate)</name>
        <dbReference type="ChEBI" id="CHEBI:57836"/>
    </ligand>
</feature>
<feature type="binding site" evidence="1">
    <location>
        <position position="311"/>
    </location>
    <ligand>
        <name>a 1,2-diacyl-sn-glycero-3-phospho-(1D-myo-inositol-3,4,5-trisphosphate)</name>
        <dbReference type="ChEBI" id="CHEBI:57836"/>
    </ligand>
</feature>
<feature type="binding site" evidence="1">
    <location>
        <position position="349"/>
    </location>
    <ligand>
        <name>a 1,2-diacyl-sn-glycero-3-phospho-(1D-myo-inositol-3,4,5-trisphosphate)</name>
        <dbReference type="ChEBI" id="CHEBI:57836"/>
    </ligand>
</feature>
<feature type="binding site" evidence="1">
    <location>
        <position position="360"/>
    </location>
    <ligand>
        <name>a 1,2-diacyl-sn-glycero-3-phospho-(1D-myo-inositol-3,4,5-trisphosphate)</name>
        <dbReference type="ChEBI" id="CHEBI:57836"/>
    </ligand>
</feature>
<feature type="binding site" evidence="1">
    <location>
        <position position="361"/>
    </location>
    <ligand>
        <name>a 1,2-diacyl-sn-glycero-3-phospho-(1D-myo-inositol-3,4,5-trisphosphate)</name>
        <dbReference type="ChEBI" id="CHEBI:57836"/>
    </ligand>
</feature>